<keyword id="KW-0131">Cell cycle</keyword>
<keyword id="KW-0132">Cell division</keyword>
<keyword id="KW-0997">Cell inner membrane</keyword>
<keyword id="KW-1003">Cell membrane</keyword>
<keyword id="KW-0133">Cell shape</keyword>
<keyword id="KW-0961">Cell wall biogenesis/degradation</keyword>
<keyword id="KW-0460">Magnesium</keyword>
<keyword id="KW-0472">Membrane</keyword>
<keyword id="KW-0479">Metal-binding</keyword>
<keyword id="KW-0573">Peptidoglycan synthesis</keyword>
<keyword id="KW-0808">Transferase</keyword>
<keyword id="KW-0812">Transmembrane</keyword>
<keyword id="KW-1133">Transmembrane helix</keyword>
<reference key="1">
    <citation type="submission" date="2006-08" db="EMBL/GenBank/DDBJ databases">
        <title>Complete sequence of chromosome 1 of Shewanella sp. MR-7.</title>
        <authorList>
            <person name="Copeland A."/>
            <person name="Lucas S."/>
            <person name="Lapidus A."/>
            <person name="Barry K."/>
            <person name="Detter J.C."/>
            <person name="Glavina del Rio T."/>
            <person name="Hammon N."/>
            <person name="Israni S."/>
            <person name="Dalin E."/>
            <person name="Tice H."/>
            <person name="Pitluck S."/>
            <person name="Kiss H."/>
            <person name="Brettin T."/>
            <person name="Bruce D."/>
            <person name="Han C."/>
            <person name="Tapia R."/>
            <person name="Gilna P."/>
            <person name="Schmutz J."/>
            <person name="Larimer F."/>
            <person name="Land M."/>
            <person name="Hauser L."/>
            <person name="Kyrpides N."/>
            <person name="Mikhailova N."/>
            <person name="Nealson K."/>
            <person name="Konstantinidis K."/>
            <person name="Klappenbach J."/>
            <person name="Tiedje J."/>
            <person name="Richardson P."/>
        </authorList>
    </citation>
    <scope>NUCLEOTIDE SEQUENCE [LARGE SCALE GENOMIC DNA]</scope>
    <source>
        <strain>MR-7</strain>
    </source>
</reference>
<dbReference type="EC" id="2.7.8.13" evidence="1"/>
<dbReference type="EMBL" id="CP000444">
    <property type="protein sequence ID" value="ABI41386.1"/>
    <property type="molecule type" value="Genomic_DNA"/>
</dbReference>
<dbReference type="SMR" id="Q0HZR9"/>
<dbReference type="KEGG" id="shm:Shewmr7_0383"/>
<dbReference type="HOGENOM" id="CLU_023982_0_0_6"/>
<dbReference type="UniPathway" id="UPA00219"/>
<dbReference type="GO" id="GO:0005886">
    <property type="term" value="C:plasma membrane"/>
    <property type="evidence" value="ECO:0007669"/>
    <property type="project" value="UniProtKB-SubCell"/>
</dbReference>
<dbReference type="GO" id="GO:0046872">
    <property type="term" value="F:metal ion binding"/>
    <property type="evidence" value="ECO:0007669"/>
    <property type="project" value="UniProtKB-KW"/>
</dbReference>
<dbReference type="GO" id="GO:0008963">
    <property type="term" value="F:phospho-N-acetylmuramoyl-pentapeptide-transferase activity"/>
    <property type="evidence" value="ECO:0007669"/>
    <property type="project" value="UniProtKB-UniRule"/>
</dbReference>
<dbReference type="GO" id="GO:0051992">
    <property type="term" value="F:UDP-N-acetylmuramoyl-L-alanyl-D-glutamyl-meso-2,6-diaminopimelyl-D-alanyl-D-alanine:undecaprenyl-phosphate transferase activity"/>
    <property type="evidence" value="ECO:0007669"/>
    <property type="project" value="RHEA"/>
</dbReference>
<dbReference type="GO" id="GO:0051301">
    <property type="term" value="P:cell division"/>
    <property type="evidence" value="ECO:0007669"/>
    <property type="project" value="UniProtKB-KW"/>
</dbReference>
<dbReference type="GO" id="GO:0071555">
    <property type="term" value="P:cell wall organization"/>
    <property type="evidence" value="ECO:0007669"/>
    <property type="project" value="UniProtKB-KW"/>
</dbReference>
<dbReference type="GO" id="GO:0009252">
    <property type="term" value="P:peptidoglycan biosynthetic process"/>
    <property type="evidence" value="ECO:0007669"/>
    <property type="project" value="UniProtKB-UniRule"/>
</dbReference>
<dbReference type="GO" id="GO:0008360">
    <property type="term" value="P:regulation of cell shape"/>
    <property type="evidence" value="ECO:0007669"/>
    <property type="project" value="UniProtKB-KW"/>
</dbReference>
<dbReference type="CDD" id="cd06852">
    <property type="entry name" value="GT_MraY"/>
    <property type="match status" value="1"/>
</dbReference>
<dbReference type="HAMAP" id="MF_00038">
    <property type="entry name" value="MraY"/>
    <property type="match status" value="1"/>
</dbReference>
<dbReference type="InterPro" id="IPR000715">
    <property type="entry name" value="Glycosyl_transferase_4"/>
</dbReference>
<dbReference type="InterPro" id="IPR003524">
    <property type="entry name" value="PNAcMuramoyl-5peptid_Trfase"/>
</dbReference>
<dbReference type="InterPro" id="IPR018480">
    <property type="entry name" value="PNAcMuramoyl-5peptid_Trfase_CS"/>
</dbReference>
<dbReference type="NCBIfam" id="TIGR00445">
    <property type="entry name" value="mraY"/>
    <property type="match status" value="1"/>
</dbReference>
<dbReference type="PANTHER" id="PTHR22926">
    <property type="entry name" value="PHOSPHO-N-ACETYLMURAMOYL-PENTAPEPTIDE-TRANSFERASE"/>
    <property type="match status" value="1"/>
</dbReference>
<dbReference type="PANTHER" id="PTHR22926:SF5">
    <property type="entry name" value="PHOSPHO-N-ACETYLMURAMOYL-PENTAPEPTIDE-TRANSFERASE HOMOLOG"/>
    <property type="match status" value="1"/>
</dbReference>
<dbReference type="Pfam" id="PF00953">
    <property type="entry name" value="Glycos_transf_4"/>
    <property type="match status" value="1"/>
</dbReference>
<dbReference type="Pfam" id="PF10555">
    <property type="entry name" value="MraY_sig1"/>
    <property type="match status" value="1"/>
</dbReference>
<dbReference type="PROSITE" id="PS01347">
    <property type="entry name" value="MRAY_1"/>
    <property type="match status" value="1"/>
</dbReference>
<dbReference type="PROSITE" id="PS01348">
    <property type="entry name" value="MRAY_2"/>
    <property type="match status" value="1"/>
</dbReference>
<protein>
    <recommendedName>
        <fullName evidence="1">Phospho-N-acetylmuramoyl-pentapeptide-transferase</fullName>
        <ecNumber evidence="1">2.7.8.13</ecNumber>
    </recommendedName>
    <alternativeName>
        <fullName evidence="1">UDP-MurNAc-pentapeptide phosphotransferase</fullName>
    </alternativeName>
</protein>
<proteinExistence type="inferred from homology"/>
<evidence type="ECO:0000255" key="1">
    <source>
        <dbReference type="HAMAP-Rule" id="MF_00038"/>
    </source>
</evidence>
<name>MRAY_SHESR</name>
<organism>
    <name type="scientific">Shewanella sp. (strain MR-7)</name>
    <dbReference type="NCBI Taxonomy" id="60481"/>
    <lineage>
        <taxon>Bacteria</taxon>
        <taxon>Pseudomonadati</taxon>
        <taxon>Pseudomonadota</taxon>
        <taxon>Gammaproteobacteria</taxon>
        <taxon>Alteromonadales</taxon>
        <taxon>Shewanellaceae</taxon>
        <taxon>Shewanella</taxon>
    </lineage>
</organism>
<accession>Q0HZR9</accession>
<gene>
    <name evidence="1" type="primary">mraY</name>
    <name type="ordered locus">Shewmr7_0383</name>
</gene>
<sequence>MLVYLAEYLTRFHTGFNVFSYVTFRAILGLLTALMFSLWWGPKLIERLQLMQIGQVVRNDGPESHFSKRGTPTMGGLMILGAIFISVLLWGDLGSRYVWVMLFVLGSFGMIGFIDDYRKVVRKDTKGLIARWKYILQSLAALIIAFFLYTTASNPGETQLVVPFFKDVMPQLGAVFIVLAYFTIVGSSNAVNLTDGLDGLAIMPTVMVAAAFALIAYLSGHAQFANYLHIPHLPGSGELVIVCTAIVGAGLGFLWFNTYPAQVFMGDVGSLSLGAALGAIAVLVRQEILLVIMGGVFVMETVSVILQVGSYKLRGQRIFRMAPIHHHYELKGWPEPRVIVRFWIISIFLVLLGLATLKLR</sequence>
<comment type="function">
    <text evidence="1">Catalyzes the initial step of the lipid cycle reactions in the biosynthesis of the cell wall peptidoglycan: transfers peptidoglycan precursor phospho-MurNAc-pentapeptide from UDP-MurNAc-pentapeptide onto the lipid carrier undecaprenyl phosphate, yielding undecaprenyl-pyrophosphoryl-MurNAc-pentapeptide, known as lipid I.</text>
</comment>
<comment type="catalytic activity">
    <reaction evidence="1">
        <text>UDP-N-acetyl-alpha-D-muramoyl-L-alanyl-gamma-D-glutamyl-meso-2,6-diaminopimeloyl-D-alanyl-D-alanine + di-trans,octa-cis-undecaprenyl phosphate = di-trans,octa-cis-undecaprenyl diphospho-N-acetyl-alpha-D-muramoyl-L-alanyl-D-glutamyl-meso-2,6-diaminopimeloyl-D-alanyl-D-alanine + UMP</text>
        <dbReference type="Rhea" id="RHEA:28386"/>
        <dbReference type="ChEBI" id="CHEBI:57865"/>
        <dbReference type="ChEBI" id="CHEBI:60392"/>
        <dbReference type="ChEBI" id="CHEBI:61386"/>
        <dbReference type="ChEBI" id="CHEBI:61387"/>
        <dbReference type="EC" id="2.7.8.13"/>
    </reaction>
</comment>
<comment type="cofactor">
    <cofactor evidence="1">
        <name>Mg(2+)</name>
        <dbReference type="ChEBI" id="CHEBI:18420"/>
    </cofactor>
</comment>
<comment type="pathway">
    <text evidence="1">Cell wall biogenesis; peptidoglycan biosynthesis.</text>
</comment>
<comment type="subcellular location">
    <subcellularLocation>
        <location evidence="1">Cell inner membrane</location>
        <topology evidence="1">Multi-pass membrane protein</topology>
    </subcellularLocation>
</comment>
<comment type="similarity">
    <text evidence="1">Belongs to the glycosyltransferase 4 family. MraY subfamily.</text>
</comment>
<feature type="chain" id="PRO_1000003063" description="Phospho-N-acetylmuramoyl-pentapeptide-transferase">
    <location>
        <begin position="1"/>
        <end position="360"/>
    </location>
</feature>
<feature type="transmembrane region" description="Helical" evidence="1">
    <location>
        <begin position="26"/>
        <end position="46"/>
    </location>
</feature>
<feature type="transmembrane region" description="Helical" evidence="1">
    <location>
        <begin position="74"/>
        <end position="94"/>
    </location>
</feature>
<feature type="transmembrane region" description="Helical" evidence="1">
    <location>
        <begin position="97"/>
        <end position="117"/>
    </location>
</feature>
<feature type="transmembrane region" description="Helical" evidence="1">
    <location>
        <begin position="132"/>
        <end position="152"/>
    </location>
</feature>
<feature type="transmembrane region" description="Helical" evidence="1">
    <location>
        <begin position="168"/>
        <end position="188"/>
    </location>
</feature>
<feature type="transmembrane region" description="Helical" evidence="1">
    <location>
        <begin position="199"/>
        <end position="219"/>
    </location>
</feature>
<feature type="transmembrane region" description="Helical" evidence="1">
    <location>
        <begin position="236"/>
        <end position="256"/>
    </location>
</feature>
<feature type="transmembrane region" description="Helical" evidence="1">
    <location>
        <begin position="263"/>
        <end position="283"/>
    </location>
</feature>
<feature type="transmembrane region" description="Helical" evidence="1">
    <location>
        <begin position="288"/>
        <end position="308"/>
    </location>
</feature>
<feature type="transmembrane region" description="Helical" evidence="1">
    <location>
        <begin position="338"/>
        <end position="358"/>
    </location>
</feature>